<evidence type="ECO:0000255" key="1">
    <source>
        <dbReference type="HAMAP-Rule" id="MF_00331"/>
    </source>
</evidence>
<gene>
    <name evidence="1" type="primary">iscS</name>
    <name type="ordered locus">EcE24377A_2815</name>
</gene>
<organism>
    <name type="scientific">Escherichia coli O139:H28 (strain E24377A / ETEC)</name>
    <dbReference type="NCBI Taxonomy" id="331111"/>
    <lineage>
        <taxon>Bacteria</taxon>
        <taxon>Pseudomonadati</taxon>
        <taxon>Pseudomonadota</taxon>
        <taxon>Gammaproteobacteria</taxon>
        <taxon>Enterobacterales</taxon>
        <taxon>Enterobacteriaceae</taxon>
        <taxon>Escherichia</taxon>
    </lineage>
</organism>
<protein>
    <recommendedName>
        <fullName evidence="1">Cysteine desulfurase IscS</fullName>
        <ecNumber evidence="1">2.8.1.7</ecNumber>
    </recommendedName>
</protein>
<accession>A7ZPX4</accession>
<keyword id="KW-0001">2Fe-2S</keyword>
<keyword id="KW-0963">Cytoplasm</keyword>
<keyword id="KW-0408">Iron</keyword>
<keyword id="KW-0411">Iron-sulfur</keyword>
<keyword id="KW-0479">Metal-binding</keyword>
<keyword id="KW-0663">Pyridoxal phosphate</keyword>
<keyword id="KW-1185">Reference proteome</keyword>
<keyword id="KW-0808">Transferase</keyword>
<reference key="1">
    <citation type="journal article" date="2008" name="J. Bacteriol.">
        <title>The pangenome structure of Escherichia coli: comparative genomic analysis of E. coli commensal and pathogenic isolates.</title>
        <authorList>
            <person name="Rasko D.A."/>
            <person name="Rosovitz M.J."/>
            <person name="Myers G.S.A."/>
            <person name="Mongodin E.F."/>
            <person name="Fricke W.F."/>
            <person name="Gajer P."/>
            <person name="Crabtree J."/>
            <person name="Sebaihia M."/>
            <person name="Thomson N.R."/>
            <person name="Chaudhuri R."/>
            <person name="Henderson I.R."/>
            <person name="Sperandio V."/>
            <person name="Ravel J."/>
        </authorList>
    </citation>
    <scope>NUCLEOTIDE SEQUENCE [LARGE SCALE GENOMIC DNA]</scope>
    <source>
        <strain>E24377A / ETEC</strain>
    </source>
</reference>
<comment type="function">
    <text evidence="1">Master enzyme that delivers sulfur to a number of partners involved in Fe-S cluster assembly, tRNA modification or cofactor biosynthesis. Catalyzes the removal of elemental sulfur and selenium atoms from cysteine and selenocysteine to produce alanine. Functions as a sulfur delivery protein for Fe-S cluster synthesis onto IscU, an Fe-S scaffold assembly protein, as well as other S acceptor proteins. Also functions as a selenium delivery protein in the pathway for the biosynthesis of selenophosphate.</text>
</comment>
<comment type="catalytic activity">
    <reaction evidence="1">
        <text>(sulfur carrier)-H + L-cysteine = (sulfur carrier)-SH + L-alanine</text>
        <dbReference type="Rhea" id="RHEA:43892"/>
        <dbReference type="Rhea" id="RHEA-COMP:14737"/>
        <dbReference type="Rhea" id="RHEA-COMP:14739"/>
        <dbReference type="ChEBI" id="CHEBI:29917"/>
        <dbReference type="ChEBI" id="CHEBI:35235"/>
        <dbReference type="ChEBI" id="CHEBI:57972"/>
        <dbReference type="ChEBI" id="CHEBI:64428"/>
        <dbReference type="EC" id="2.8.1.7"/>
    </reaction>
</comment>
<comment type="cofactor">
    <cofactor evidence="1">
        <name>pyridoxal 5'-phosphate</name>
        <dbReference type="ChEBI" id="CHEBI:597326"/>
    </cofactor>
</comment>
<comment type="pathway">
    <text evidence="1">Cofactor biosynthesis; iron-sulfur cluster biosynthesis.</text>
</comment>
<comment type="subunit">
    <text evidence="1">Homodimer. Forms a heterotetramer with IscU, interacts with other sulfur acceptors.</text>
</comment>
<comment type="subcellular location">
    <subcellularLocation>
        <location evidence="1">Cytoplasm</location>
    </subcellularLocation>
</comment>
<comment type="similarity">
    <text evidence="1">Belongs to the class-V pyridoxal-phosphate-dependent aminotransferase family. NifS/IscS subfamily.</text>
</comment>
<proteinExistence type="inferred from homology"/>
<dbReference type="EC" id="2.8.1.7" evidence="1"/>
<dbReference type="EMBL" id="CP000800">
    <property type="protein sequence ID" value="ABV17712.1"/>
    <property type="molecule type" value="Genomic_DNA"/>
</dbReference>
<dbReference type="RefSeq" id="WP_001295373.1">
    <property type="nucleotide sequence ID" value="NC_009801.1"/>
</dbReference>
<dbReference type="BMRB" id="A7ZPX4"/>
<dbReference type="SMR" id="A7ZPX4"/>
<dbReference type="GeneID" id="93774606"/>
<dbReference type="KEGG" id="ecw:EcE24377A_2815"/>
<dbReference type="HOGENOM" id="CLU_003433_0_2_6"/>
<dbReference type="UniPathway" id="UPA00266"/>
<dbReference type="Proteomes" id="UP000001122">
    <property type="component" value="Chromosome"/>
</dbReference>
<dbReference type="GO" id="GO:1990221">
    <property type="term" value="C:L-cysteine desulfurase complex"/>
    <property type="evidence" value="ECO:0007669"/>
    <property type="project" value="UniProtKB-ARBA"/>
</dbReference>
<dbReference type="GO" id="GO:0051537">
    <property type="term" value="F:2 iron, 2 sulfur cluster binding"/>
    <property type="evidence" value="ECO:0007669"/>
    <property type="project" value="UniProtKB-UniRule"/>
</dbReference>
<dbReference type="GO" id="GO:0031071">
    <property type="term" value="F:cysteine desulfurase activity"/>
    <property type="evidence" value="ECO:0007669"/>
    <property type="project" value="UniProtKB-UniRule"/>
</dbReference>
<dbReference type="GO" id="GO:0046872">
    <property type="term" value="F:metal ion binding"/>
    <property type="evidence" value="ECO:0007669"/>
    <property type="project" value="UniProtKB-KW"/>
</dbReference>
<dbReference type="GO" id="GO:0030170">
    <property type="term" value="F:pyridoxal phosphate binding"/>
    <property type="evidence" value="ECO:0007669"/>
    <property type="project" value="UniProtKB-UniRule"/>
</dbReference>
<dbReference type="GO" id="GO:0044571">
    <property type="term" value="P:[2Fe-2S] cluster assembly"/>
    <property type="evidence" value="ECO:0007669"/>
    <property type="project" value="UniProtKB-UniRule"/>
</dbReference>
<dbReference type="FunFam" id="3.40.640.10:FF:000003">
    <property type="entry name" value="Cysteine desulfurase IscS"/>
    <property type="match status" value="1"/>
</dbReference>
<dbReference type="FunFam" id="3.90.1150.10:FF:000002">
    <property type="entry name" value="Cysteine desulfurase IscS"/>
    <property type="match status" value="1"/>
</dbReference>
<dbReference type="Gene3D" id="3.90.1150.10">
    <property type="entry name" value="Aspartate Aminotransferase, domain 1"/>
    <property type="match status" value="1"/>
</dbReference>
<dbReference type="Gene3D" id="3.40.640.10">
    <property type="entry name" value="Type I PLP-dependent aspartate aminotransferase-like (Major domain)"/>
    <property type="match status" value="1"/>
</dbReference>
<dbReference type="HAMAP" id="MF_00331">
    <property type="entry name" value="Cys_desulf_IscS"/>
    <property type="match status" value="1"/>
</dbReference>
<dbReference type="InterPro" id="IPR000192">
    <property type="entry name" value="Aminotrans_V_dom"/>
</dbReference>
<dbReference type="InterPro" id="IPR020578">
    <property type="entry name" value="Aminotrans_V_PyrdxlP_BS"/>
</dbReference>
<dbReference type="InterPro" id="IPR010240">
    <property type="entry name" value="Cys_deSase_IscS"/>
</dbReference>
<dbReference type="InterPro" id="IPR016454">
    <property type="entry name" value="Cysteine_dSase"/>
</dbReference>
<dbReference type="InterPro" id="IPR015424">
    <property type="entry name" value="PyrdxlP-dep_Trfase"/>
</dbReference>
<dbReference type="InterPro" id="IPR015421">
    <property type="entry name" value="PyrdxlP-dep_Trfase_major"/>
</dbReference>
<dbReference type="InterPro" id="IPR015422">
    <property type="entry name" value="PyrdxlP-dep_Trfase_small"/>
</dbReference>
<dbReference type="NCBIfam" id="TIGR02006">
    <property type="entry name" value="IscS"/>
    <property type="match status" value="1"/>
</dbReference>
<dbReference type="NCBIfam" id="NF002806">
    <property type="entry name" value="PRK02948.1"/>
    <property type="match status" value="1"/>
</dbReference>
<dbReference type="NCBIfam" id="NF010611">
    <property type="entry name" value="PRK14012.1"/>
    <property type="match status" value="1"/>
</dbReference>
<dbReference type="PANTHER" id="PTHR11601:SF34">
    <property type="entry name" value="CYSTEINE DESULFURASE"/>
    <property type="match status" value="1"/>
</dbReference>
<dbReference type="PANTHER" id="PTHR11601">
    <property type="entry name" value="CYSTEINE DESULFURYLASE FAMILY MEMBER"/>
    <property type="match status" value="1"/>
</dbReference>
<dbReference type="Pfam" id="PF00266">
    <property type="entry name" value="Aminotran_5"/>
    <property type="match status" value="1"/>
</dbReference>
<dbReference type="PIRSF" id="PIRSF005572">
    <property type="entry name" value="NifS"/>
    <property type="match status" value="1"/>
</dbReference>
<dbReference type="SUPFAM" id="SSF53383">
    <property type="entry name" value="PLP-dependent transferases"/>
    <property type="match status" value="1"/>
</dbReference>
<dbReference type="PROSITE" id="PS00595">
    <property type="entry name" value="AA_TRANSFER_CLASS_5"/>
    <property type="match status" value="1"/>
</dbReference>
<feature type="chain" id="PRO_1000059490" description="Cysteine desulfurase IscS">
    <location>
        <begin position="1"/>
        <end position="404"/>
    </location>
</feature>
<feature type="active site" description="Cysteine persulfide intermediate" evidence="1">
    <location>
        <position position="328"/>
    </location>
</feature>
<feature type="binding site" evidence="1">
    <location>
        <begin position="75"/>
        <end position="76"/>
    </location>
    <ligand>
        <name>pyridoxal 5'-phosphate</name>
        <dbReference type="ChEBI" id="CHEBI:597326"/>
    </ligand>
</feature>
<feature type="binding site" evidence="1">
    <location>
        <position position="155"/>
    </location>
    <ligand>
        <name>pyridoxal 5'-phosphate</name>
        <dbReference type="ChEBI" id="CHEBI:597326"/>
    </ligand>
</feature>
<feature type="binding site" evidence="1">
    <location>
        <position position="183"/>
    </location>
    <ligand>
        <name>pyridoxal 5'-phosphate</name>
        <dbReference type="ChEBI" id="CHEBI:597326"/>
    </ligand>
</feature>
<feature type="binding site" evidence="1">
    <location>
        <begin position="203"/>
        <end position="205"/>
    </location>
    <ligand>
        <name>pyridoxal 5'-phosphate</name>
        <dbReference type="ChEBI" id="CHEBI:597326"/>
    </ligand>
</feature>
<feature type="binding site" evidence="1">
    <location>
        <position position="243"/>
    </location>
    <ligand>
        <name>pyridoxal 5'-phosphate</name>
        <dbReference type="ChEBI" id="CHEBI:597326"/>
    </ligand>
</feature>
<feature type="binding site" description="via persulfide group" evidence="1">
    <location>
        <position position="328"/>
    </location>
    <ligand>
        <name>[2Fe-2S] cluster</name>
        <dbReference type="ChEBI" id="CHEBI:190135"/>
        <note>ligand shared with IscU</note>
    </ligand>
</feature>
<feature type="modified residue" description="N6-(pyridoxal phosphate)lysine" evidence="1">
    <location>
        <position position="206"/>
    </location>
</feature>
<sequence length="404" mass="45090">MKLPIYLDYSATTPVDPRVAEKMMQFMTMDGTFGNPASRSHRFGWQAEEAVDIARNQIADLVGADPREIVFTSGATESDNLAIKGAANFYQKKGKHIITSKTEHKAVLDTCRQLEREGFEVTYLAPQRNGIIDLKELEAAMRDDTILVSIMHVNNEIGVVQDIAAIGEMCRARGIIYHVDATQSVGKLPIDLSQLKVDLMSFSGHKIYGPKGIGALYVRRKPRVRIEAQMHGGGHERGMRSGTLPVHQIVGMGEAYRIAKEEMATEMERLRGLRNRLWNGIKDIEEVYLNGDLEHGAPNILNVSFNYVEGESLIMALKDLAVSSGSACTSASLEPSYVLRALGLNDELAHSSIRFSLGRFTTEEEIDYTIELVRKSIGRLRDLSPLWEMYKQGVDLNSIEWAHH</sequence>
<name>ISCS_ECO24</name>